<organism>
    <name type="scientific">Bordetella avium (strain 197N)</name>
    <dbReference type="NCBI Taxonomy" id="360910"/>
    <lineage>
        <taxon>Bacteria</taxon>
        <taxon>Pseudomonadati</taxon>
        <taxon>Pseudomonadota</taxon>
        <taxon>Betaproteobacteria</taxon>
        <taxon>Burkholderiales</taxon>
        <taxon>Alcaligenaceae</taxon>
        <taxon>Bordetella</taxon>
    </lineage>
</organism>
<proteinExistence type="inferred from homology"/>
<accession>Q2KYU4</accession>
<keyword id="KW-0997">Cell inner membrane</keyword>
<keyword id="KW-1003">Cell membrane</keyword>
<keyword id="KW-0472">Membrane</keyword>
<keyword id="KW-1185">Reference proteome</keyword>
<keyword id="KW-0769">Symport</keyword>
<keyword id="KW-0812">Transmembrane</keyword>
<keyword id="KW-1133">Transmembrane helix</keyword>
<keyword id="KW-0813">Transport</keyword>
<reference key="1">
    <citation type="journal article" date="2006" name="J. Bacteriol.">
        <title>Comparison of the genome sequence of the poultry pathogen Bordetella avium with those of B. bronchiseptica, B. pertussis, and B. parapertussis reveals extensive diversity in surface structures associated with host interaction.</title>
        <authorList>
            <person name="Sebaihia M."/>
            <person name="Preston A."/>
            <person name="Maskell D.J."/>
            <person name="Kuzmiak H."/>
            <person name="Connell T.D."/>
            <person name="King N.D."/>
            <person name="Orndorff P.E."/>
            <person name="Miyamoto D.M."/>
            <person name="Thomson N.R."/>
            <person name="Harris D."/>
            <person name="Goble A."/>
            <person name="Lord A."/>
            <person name="Murphy L."/>
            <person name="Quail M.A."/>
            <person name="Rutter S."/>
            <person name="Squares R."/>
            <person name="Squares S."/>
            <person name="Woodward J."/>
            <person name="Parkhill J."/>
            <person name="Temple L.M."/>
        </authorList>
    </citation>
    <scope>NUCLEOTIDE SEQUENCE [LARGE SCALE GENOMIC DNA]</scope>
    <source>
        <strain>197N</strain>
    </source>
</reference>
<comment type="function">
    <text evidence="1">Responsible for the transport of dicarboxylates such as succinate, fumarate, and malate from the periplasm across the membrane.</text>
</comment>
<comment type="subcellular location">
    <subcellularLocation>
        <location evidence="1">Cell inner membrane</location>
        <topology evidence="1">Multi-pass membrane protein</topology>
    </subcellularLocation>
</comment>
<comment type="similarity">
    <text evidence="1">Belongs to the dicarboxylate/amino acid:cation symporter (DAACS) (TC 2.A.23) family.</text>
</comment>
<dbReference type="EMBL" id="AM167904">
    <property type="protein sequence ID" value="CAJ49828.1"/>
    <property type="molecule type" value="Genomic_DNA"/>
</dbReference>
<dbReference type="RefSeq" id="WP_012417880.1">
    <property type="nucleotide sequence ID" value="NC_010645.1"/>
</dbReference>
<dbReference type="SMR" id="Q2KYU4"/>
<dbReference type="STRING" id="360910.BAV2218"/>
<dbReference type="GeneID" id="92934721"/>
<dbReference type="KEGG" id="bav:BAV2218"/>
<dbReference type="eggNOG" id="COG1301">
    <property type="taxonomic scope" value="Bacteria"/>
</dbReference>
<dbReference type="HOGENOM" id="CLU_019375_7_0_4"/>
<dbReference type="OrthoDB" id="9766690at2"/>
<dbReference type="Proteomes" id="UP000001977">
    <property type="component" value="Chromosome"/>
</dbReference>
<dbReference type="GO" id="GO:0005886">
    <property type="term" value="C:plasma membrane"/>
    <property type="evidence" value="ECO:0007669"/>
    <property type="project" value="UniProtKB-SubCell"/>
</dbReference>
<dbReference type="GO" id="GO:0015138">
    <property type="term" value="F:fumarate transmembrane transporter activity"/>
    <property type="evidence" value="ECO:0007669"/>
    <property type="project" value="TreeGrafter"/>
</dbReference>
<dbReference type="GO" id="GO:0015366">
    <property type="term" value="F:malate:proton symporter activity"/>
    <property type="evidence" value="ECO:0007669"/>
    <property type="project" value="TreeGrafter"/>
</dbReference>
<dbReference type="GO" id="GO:0015141">
    <property type="term" value="F:succinate transmembrane transporter activity"/>
    <property type="evidence" value="ECO:0007669"/>
    <property type="project" value="TreeGrafter"/>
</dbReference>
<dbReference type="GO" id="GO:0070778">
    <property type="term" value="P:L-aspartate transmembrane transport"/>
    <property type="evidence" value="ECO:0007669"/>
    <property type="project" value="TreeGrafter"/>
</dbReference>
<dbReference type="FunFam" id="1.10.3860.10:FF:000001">
    <property type="entry name" value="C4-dicarboxylate transport protein"/>
    <property type="match status" value="1"/>
</dbReference>
<dbReference type="Gene3D" id="1.10.3860.10">
    <property type="entry name" value="Sodium:dicarboxylate symporter"/>
    <property type="match status" value="1"/>
</dbReference>
<dbReference type="HAMAP" id="MF_01300">
    <property type="entry name" value="C4_dicarb_transport"/>
    <property type="match status" value="1"/>
</dbReference>
<dbReference type="InterPro" id="IPR023954">
    <property type="entry name" value="C4_dicarb_transport"/>
</dbReference>
<dbReference type="InterPro" id="IPR001991">
    <property type="entry name" value="Na-dicarboxylate_symporter"/>
</dbReference>
<dbReference type="InterPro" id="IPR018107">
    <property type="entry name" value="Na-dicarboxylate_symporter_CS"/>
</dbReference>
<dbReference type="InterPro" id="IPR036458">
    <property type="entry name" value="Na:dicarbo_symporter_sf"/>
</dbReference>
<dbReference type="NCBIfam" id="NF002461">
    <property type="entry name" value="PRK01663.1"/>
    <property type="match status" value="1"/>
</dbReference>
<dbReference type="NCBIfam" id="NF009587">
    <property type="entry name" value="PRK13027.1"/>
    <property type="match status" value="1"/>
</dbReference>
<dbReference type="PANTHER" id="PTHR42865:SF1">
    <property type="entry name" value="AEROBIC C4-DICARBOXYLATE TRANSPORT PROTEIN"/>
    <property type="match status" value="1"/>
</dbReference>
<dbReference type="PANTHER" id="PTHR42865">
    <property type="entry name" value="PROTON/GLUTAMATE-ASPARTATE SYMPORTER"/>
    <property type="match status" value="1"/>
</dbReference>
<dbReference type="Pfam" id="PF00375">
    <property type="entry name" value="SDF"/>
    <property type="match status" value="1"/>
</dbReference>
<dbReference type="PRINTS" id="PR00173">
    <property type="entry name" value="EDTRNSPORT"/>
</dbReference>
<dbReference type="SUPFAM" id="SSF118215">
    <property type="entry name" value="Proton glutamate symport protein"/>
    <property type="match status" value="1"/>
</dbReference>
<dbReference type="PROSITE" id="PS00713">
    <property type="entry name" value="NA_DICARBOXYL_SYMP_1"/>
    <property type="match status" value="1"/>
</dbReference>
<dbReference type="PROSITE" id="PS00714">
    <property type="entry name" value="NA_DICARBOXYL_SYMP_2"/>
    <property type="match status" value="1"/>
</dbReference>
<name>DCTA_BORA1</name>
<gene>
    <name evidence="1" type="primary">dctA</name>
    <name type="ordered locus">BAV2218</name>
</gene>
<evidence type="ECO:0000255" key="1">
    <source>
        <dbReference type="HAMAP-Rule" id="MF_01300"/>
    </source>
</evidence>
<sequence>MIEVDQSAGAPVRKHKFYQILYVQVLVAIVIGVLLGYFKPDLGEAMKPLGDGFIKLVKMIIAPVIFLTVTTGIAAMSDLKKVGRVAGKAMVYFLVFSTLALIIGMVVSHIVQPGAGLHIDPASLDQKSVAGYVTKAHDSTITGFLLNIIPATMLSPFVGGDILQVLFVAVLFGLSLAMVGPRAQPITDFFNALSAPVFKLVAILMKAAPIGAFGAMAFTIGKYGIKSIVNLAMLVGTFYATSVLFVVVVLGMVARYNGFSIIKLVRYIREELLLVLGTSSSEAALPTLMEKMERAGCSKSVVGLVVPTGYSFNLDGTNIYMTMAALFIAQACDIPLSLGDQILLLLVAMLSSKGAAGVTGAGFITLAATLSVVPTVPVAGMALILGVDRFMSECRALTNLVGNATASIVVARWEGELDKTALHVALNSDGELPSTDPTSPARQGH</sequence>
<protein>
    <recommendedName>
        <fullName evidence="1">C4-dicarboxylate transport protein</fullName>
    </recommendedName>
</protein>
<feature type="chain" id="PRO_0000321969" description="C4-dicarboxylate transport protein">
    <location>
        <begin position="1"/>
        <end position="445"/>
    </location>
</feature>
<feature type="transmembrane region" description="Helical" evidence="1">
    <location>
        <begin position="17"/>
        <end position="37"/>
    </location>
</feature>
<feature type="transmembrane region" description="Helical" evidence="1">
    <location>
        <begin position="56"/>
        <end position="76"/>
    </location>
</feature>
<feature type="transmembrane region" description="Helical" evidence="1">
    <location>
        <begin position="91"/>
        <end position="111"/>
    </location>
</feature>
<feature type="transmembrane region" description="Helical" evidence="1">
    <location>
        <begin position="157"/>
        <end position="177"/>
    </location>
</feature>
<feature type="transmembrane region" description="Helical" evidence="1">
    <location>
        <begin position="200"/>
        <end position="220"/>
    </location>
</feature>
<feature type="transmembrane region" description="Helical" evidence="1">
    <location>
        <begin position="233"/>
        <end position="253"/>
    </location>
</feature>
<feature type="transmembrane region" description="Helical" evidence="1">
    <location>
        <begin position="319"/>
        <end position="339"/>
    </location>
</feature>
<feature type="transmembrane region" description="Helical" evidence="1">
    <location>
        <begin position="367"/>
        <end position="387"/>
    </location>
</feature>